<accession>O22693</accession>
<accession>Q0WU85</accession>
<proteinExistence type="evidence at transcript level"/>
<comment type="function">
    <text evidence="1">Galactinol synthase involved in the biosynthesis of raffinose family oligosaccharides (RFOs) that function as osmoprotectants. May promote plant stress tolerance (By similarity).</text>
</comment>
<comment type="catalytic activity">
    <reaction>
        <text>myo-inositol + UDP-alpha-D-galactose = alpha-D-galactosyl-(1-&gt;3)-1D-myo-inositol + UDP + H(+)</text>
        <dbReference type="Rhea" id="RHEA:12464"/>
        <dbReference type="ChEBI" id="CHEBI:15378"/>
        <dbReference type="ChEBI" id="CHEBI:17268"/>
        <dbReference type="ChEBI" id="CHEBI:17505"/>
        <dbReference type="ChEBI" id="CHEBI:58223"/>
        <dbReference type="ChEBI" id="CHEBI:66914"/>
        <dbReference type="EC" id="2.4.1.123"/>
    </reaction>
</comment>
<comment type="cofactor">
    <cofactor evidence="1">
        <name>a divalent metal cation</name>
        <dbReference type="ChEBI" id="CHEBI:60240"/>
    </cofactor>
</comment>
<comment type="subcellular location">
    <subcellularLocation>
        <location evidence="3">Cytoplasm</location>
    </subcellularLocation>
</comment>
<comment type="induction">
    <text evidence="2">By methylviologen (MV), a superoxide radical generating drug.</text>
</comment>
<comment type="similarity">
    <text evidence="3">Belongs to the glycosyltransferase 8 family. Galactosyltransferase subfamily.</text>
</comment>
<protein>
    <recommendedName>
        <fullName>Galactinol synthase 4</fullName>
        <shortName>AtGolS4</shortName>
        <shortName>GolS-4</shortName>
        <ecNumber>2.4.1.123</ecNumber>
    </recommendedName>
</protein>
<keyword id="KW-0119">Carbohydrate metabolism</keyword>
<keyword id="KW-0963">Cytoplasm</keyword>
<keyword id="KW-0299">Galactose metabolism</keyword>
<keyword id="KW-0328">Glycosyltransferase</keyword>
<keyword id="KW-0464">Manganese</keyword>
<keyword id="KW-0479">Metal-binding</keyword>
<keyword id="KW-1185">Reference proteome</keyword>
<keyword id="KW-0808">Transferase</keyword>
<evidence type="ECO:0000250" key="1"/>
<evidence type="ECO:0000269" key="2">
    <source>
    </source>
</evidence>
<evidence type="ECO:0000305" key="3"/>
<dbReference type="EC" id="2.4.1.123"/>
<dbReference type="EMBL" id="AC002292">
    <property type="protein sequence ID" value="AAB71970.1"/>
    <property type="molecule type" value="Genomic_DNA"/>
</dbReference>
<dbReference type="EMBL" id="CP002684">
    <property type="protein sequence ID" value="AEE33692.1"/>
    <property type="molecule type" value="Genomic_DNA"/>
</dbReference>
<dbReference type="EMBL" id="BT023412">
    <property type="protein sequence ID" value="AAY56403.1"/>
    <property type="molecule type" value="mRNA"/>
</dbReference>
<dbReference type="EMBL" id="AK227297">
    <property type="protein sequence ID" value="BAE99313.1"/>
    <property type="molecule type" value="mRNA"/>
</dbReference>
<dbReference type="PIR" id="H96629">
    <property type="entry name" value="H96629"/>
</dbReference>
<dbReference type="RefSeq" id="NP_176250.1">
    <property type="nucleotide sequence ID" value="NM_104734.4"/>
</dbReference>
<dbReference type="SMR" id="O22693"/>
<dbReference type="FunCoup" id="O22693">
    <property type="interactions" value="252"/>
</dbReference>
<dbReference type="STRING" id="3702.O22693"/>
<dbReference type="CAZy" id="GT8">
    <property type="family name" value="Glycosyltransferase Family 8"/>
</dbReference>
<dbReference type="PaxDb" id="3702-AT1G60470.1"/>
<dbReference type="ProteomicsDB" id="248454"/>
<dbReference type="EnsemblPlants" id="AT1G60470.1">
    <property type="protein sequence ID" value="AT1G60470.1"/>
    <property type="gene ID" value="AT1G60470"/>
</dbReference>
<dbReference type="GeneID" id="842342"/>
<dbReference type="Gramene" id="AT1G60470.1">
    <property type="protein sequence ID" value="AT1G60470.1"/>
    <property type="gene ID" value="AT1G60470"/>
</dbReference>
<dbReference type="KEGG" id="ath:AT1G60470"/>
<dbReference type="Araport" id="AT1G60470"/>
<dbReference type="TAIR" id="AT1G60470">
    <property type="gene designation" value="GOLS4"/>
</dbReference>
<dbReference type="eggNOG" id="KOG1950">
    <property type="taxonomic scope" value="Eukaryota"/>
</dbReference>
<dbReference type="HOGENOM" id="CLU_049943_3_0_1"/>
<dbReference type="InParanoid" id="O22693"/>
<dbReference type="OMA" id="TCETVQG"/>
<dbReference type="OrthoDB" id="2014201at2759"/>
<dbReference type="PhylomeDB" id="O22693"/>
<dbReference type="PRO" id="PR:O22693"/>
<dbReference type="Proteomes" id="UP000006548">
    <property type="component" value="Chromosome 1"/>
</dbReference>
<dbReference type="ExpressionAtlas" id="O22693">
    <property type="expression patterns" value="baseline and differential"/>
</dbReference>
<dbReference type="GO" id="GO:0005737">
    <property type="term" value="C:cytoplasm"/>
    <property type="evidence" value="ECO:0007669"/>
    <property type="project" value="UniProtKB-SubCell"/>
</dbReference>
<dbReference type="GO" id="GO:0047216">
    <property type="term" value="F:inositol 3-alpha-galactosyltransferase activity"/>
    <property type="evidence" value="ECO:0000250"/>
    <property type="project" value="UniProtKB"/>
</dbReference>
<dbReference type="GO" id="GO:0046872">
    <property type="term" value="F:metal ion binding"/>
    <property type="evidence" value="ECO:0007669"/>
    <property type="project" value="UniProtKB-KW"/>
</dbReference>
<dbReference type="GO" id="GO:0006012">
    <property type="term" value="P:galactose metabolic process"/>
    <property type="evidence" value="ECO:0000250"/>
    <property type="project" value="UniProtKB"/>
</dbReference>
<dbReference type="GO" id="GO:0006979">
    <property type="term" value="P:response to oxidative stress"/>
    <property type="evidence" value="ECO:0000270"/>
    <property type="project" value="TAIR"/>
</dbReference>
<dbReference type="CDD" id="cd02537">
    <property type="entry name" value="GT8_Glycogenin"/>
    <property type="match status" value="1"/>
</dbReference>
<dbReference type="FunFam" id="3.90.550.10:FF:000049">
    <property type="entry name" value="Hexosyltransferase"/>
    <property type="match status" value="1"/>
</dbReference>
<dbReference type="Gene3D" id="3.90.550.10">
    <property type="entry name" value="Spore Coat Polysaccharide Biosynthesis Protein SpsA, Chain A"/>
    <property type="match status" value="1"/>
</dbReference>
<dbReference type="InterPro" id="IPR002495">
    <property type="entry name" value="Glyco_trans_8"/>
</dbReference>
<dbReference type="InterPro" id="IPR050587">
    <property type="entry name" value="GNT1/Glycosyltrans_8"/>
</dbReference>
<dbReference type="InterPro" id="IPR029044">
    <property type="entry name" value="Nucleotide-diphossugar_trans"/>
</dbReference>
<dbReference type="PANTHER" id="PTHR11183">
    <property type="entry name" value="GLYCOGENIN SUBFAMILY MEMBER"/>
    <property type="match status" value="1"/>
</dbReference>
<dbReference type="Pfam" id="PF01501">
    <property type="entry name" value="Glyco_transf_8"/>
    <property type="match status" value="1"/>
</dbReference>
<dbReference type="SUPFAM" id="SSF53448">
    <property type="entry name" value="Nucleotide-diphospho-sugar transferases"/>
    <property type="match status" value="1"/>
</dbReference>
<reference key="1">
    <citation type="journal article" date="2000" name="Nature">
        <title>Sequence and analysis of chromosome 1 of the plant Arabidopsis thaliana.</title>
        <authorList>
            <person name="Theologis A."/>
            <person name="Ecker J.R."/>
            <person name="Palm C.J."/>
            <person name="Federspiel N.A."/>
            <person name="Kaul S."/>
            <person name="White O."/>
            <person name="Alonso J."/>
            <person name="Altafi H."/>
            <person name="Araujo R."/>
            <person name="Bowman C.L."/>
            <person name="Brooks S.Y."/>
            <person name="Buehler E."/>
            <person name="Chan A."/>
            <person name="Chao Q."/>
            <person name="Chen H."/>
            <person name="Cheuk R.F."/>
            <person name="Chin C.W."/>
            <person name="Chung M.K."/>
            <person name="Conn L."/>
            <person name="Conway A.B."/>
            <person name="Conway A.R."/>
            <person name="Creasy T.H."/>
            <person name="Dewar K."/>
            <person name="Dunn P."/>
            <person name="Etgu P."/>
            <person name="Feldblyum T.V."/>
            <person name="Feng J.-D."/>
            <person name="Fong B."/>
            <person name="Fujii C.Y."/>
            <person name="Gill J.E."/>
            <person name="Goldsmith A.D."/>
            <person name="Haas B."/>
            <person name="Hansen N.F."/>
            <person name="Hughes B."/>
            <person name="Huizar L."/>
            <person name="Hunter J.L."/>
            <person name="Jenkins J."/>
            <person name="Johnson-Hopson C."/>
            <person name="Khan S."/>
            <person name="Khaykin E."/>
            <person name="Kim C.J."/>
            <person name="Koo H.L."/>
            <person name="Kremenetskaia I."/>
            <person name="Kurtz D.B."/>
            <person name="Kwan A."/>
            <person name="Lam B."/>
            <person name="Langin-Hooper S."/>
            <person name="Lee A."/>
            <person name="Lee J.M."/>
            <person name="Lenz C.A."/>
            <person name="Li J.H."/>
            <person name="Li Y.-P."/>
            <person name="Lin X."/>
            <person name="Liu S.X."/>
            <person name="Liu Z.A."/>
            <person name="Luros J.S."/>
            <person name="Maiti R."/>
            <person name="Marziali A."/>
            <person name="Militscher J."/>
            <person name="Miranda M."/>
            <person name="Nguyen M."/>
            <person name="Nierman W.C."/>
            <person name="Osborne B.I."/>
            <person name="Pai G."/>
            <person name="Peterson J."/>
            <person name="Pham P.K."/>
            <person name="Rizzo M."/>
            <person name="Rooney T."/>
            <person name="Rowley D."/>
            <person name="Sakano H."/>
            <person name="Salzberg S.L."/>
            <person name="Schwartz J.R."/>
            <person name="Shinn P."/>
            <person name="Southwick A.M."/>
            <person name="Sun H."/>
            <person name="Tallon L.J."/>
            <person name="Tambunga G."/>
            <person name="Toriumi M.J."/>
            <person name="Town C.D."/>
            <person name="Utterback T."/>
            <person name="Van Aken S."/>
            <person name="Vaysberg M."/>
            <person name="Vysotskaia V.S."/>
            <person name="Walker M."/>
            <person name="Wu D."/>
            <person name="Yu G."/>
            <person name="Fraser C.M."/>
            <person name="Venter J.C."/>
            <person name="Davis R.W."/>
        </authorList>
    </citation>
    <scope>NUCLEOTIDE SEQUENCE [LARGE SCALE GENOMIC DNA]</scope>
    <source>
        <strain>cv. Columbia</strain>
    </source>
</reference>
<reference key="2">
    <citation type="journal article" date="2017" name="Plant J.">
        <title>Araport11: a complete reannotation of the Arabidopsis thaliana reference genome.</title>
        <authorList>
            <person name="Cheng C.Y."/>
            <person name="Krishnakumar V."/>
            <person name="Chan A.P."/>
            <person name="Thibaud-Nissen F."/>
            <person name="Schobel S."/>
            <person name="Town C.D."/>
        </authorList>
    </citation>
    <scope>GENOME REANNOTATION</scope>
    <source>
        <strain>cv. Columbia</strain>
    </source>
</reference>
<reference key="3">
    <citation type="submission" date="2005-05" db="EMBL/GenBank/DDBJ databases">
        <title>Arabidopsis ORF clones.</title>
        <authorList>
            <person name="Kim C.J."/>
            <person name="Chen H."/>
            <person name="Cheuk R.F."/>
            <person name="Shinn P."/>
            <person name="Ecker J.R."/>
        </authorList>
    </citation>
    <scope>NUCLEOTIDE SEQUENCE [LARGE SCALE MRNA]</scope>
    <source>
        <strain>cv. Columbia</strain>
    </source>
</reference>
<reference key="4">
    <citation type="submission" date="2006-07" db="EMBL/GenBank/DDBJ databases">
        <title>Large-scale analysis of RIKEN Arabidopsis full-length (RAFL) cDNAs.</title>
        <authorList>
            <person name="Totoki Y."/>
            <person name="Seki M."/>
            <person name="Ishida J."/>
            <person name="Nakajima M."/>
            <person name="Enju A."/>
            <person name="Kamiya A."/>
            <person name="Narusaka M."/>
            <person name="Shin-i T."/>
            <person name="Nakagawa M."/>
            <person name="Sakamoto N."/>
            <person name="Oishi K."/>
            <person name="Kohara Y."/>
            <person name="Kobayashi M."/>
            <person name="Toyoda A."/>
            <person name="Sakaki Y."/>
            <person name="Sakurai T."/>
            <person name="Iida K."/>
            <person name="Akiyama K."/>
            <person name="Satou M."/>
            <person name="Toyoda T."/>
            <person name="Konagaya A."/>
            <person name="Carninci P."/>
            <person name="Kawai J."/>
            <person name="Hayashizaki Y."/>
            <person name="Shinozaki K."/>
        </authorList>
    </citation>
    <scope>NUCLEOTIDE SEQUENCE [LARGE SCALE MRNA]</scope>
    <source>
        <strain>cv. Columbia</strain>
    </source>
</reference>
<reference key="5">
    <citation type="journal article" date="2002" name="Plant J.">
        <title>Important roles of drought- and cold-inducible genes for galactinol synthase in stress tolerance in Arabidopsis thaliana.</title>
        <authorList>
            <person name="Taji T."/>
            <person name="Ohsumi C."/>
            <person name="Iuchi S."/>
            <person name="Seki M."/>
            <person name="Kasuga M."/>
            <person name="Kobayashi M."/>
            <person name="Yamaguchi-Shinozaki K."/>
            <person name="Shinozaki K."/>
        </authorList>
    </citation>
    <scope>GENE FAMILY</scope>
</reference>
<reference key="6">
    <citation type="journal article" date="2008" name="Plant Physiol.">
        <title>Galactinol and raffinose constitute a novel function to protect plants from oxidative damage.</title>
        <authorList>
            <person name="Nishizawa A."/>
            <person name="Yabuta Y."/>
            <person name="Shigeoka S."/>
        </authorList>
    </citation>
    <scope>INDUCTION BY METHYLVIOLOGEN</scope>
    <scope>GENE FAMILY</scope>
    <scope>NOMENCLATURE</scope>
</reference>
<sequence>MAPEISVNPMYLSEKAHQAPPRRAYVTFLAGNGDYVKGVVGLAKGLRKVKSAYPLVVAMLPDVPEEHREILRSQGCVVREIEPVYPPDNQVEFAMAYYVLNYSKLRIWNFEEYSKMIYLDADIQVFDNIDHLFDLSDAYFYAVMDCFCEKTWSHSLQYSIGYCQQCPEKVTWPEDMESPPPPLYFNAGMFVFEPSPLTYESLLQTLEITPPSPFAEQDFLNMFFEKVYKPIPLVYNLVLAMLWRHPENVELEKVKVVHYCAAGSKPWRYTGEEANMDREDIKMLVDKWWDVYNDESLDFKSKIPADAEETVTKSSILASVLEPEMTYFPAPSAA</sequence>
<name>GOLS4_ARATH</name>
<gene>
    <name type="primary">GOLS4</name>
    <name type="ordered locus">At1g60470</name>
    <name type="ORF">F8A5.2</name>
</gene>
<feature type="chain" id="PRO_0000418660" description="Galactinol synthase 4">
    <location>
        <begin position="1"/>
        <end position="334"/>
    </location>
</feature>
<feature type="active site" evidence="1">
    <location>
        <position position="104"/>
    </location>
</feature>
<feature type="binding site" evidence="1">
    <location>
        <position position="120"/>
    </location>
    <ligand>
        <name>Mn(2+)</name>
        <dbReference type="ChEBI" id="CHEBI:29035"/>
    </ligand>
</feature>
<feature type="binding site" evidence="1">
    <location>
        <position position="122"/>
    </location>
    <ligand>
        <name>Mn(2+)</name>
        <dbReference type="ChEBI" id="CHEBI:29035"/>
    </ligand>
</feature>
<feature type="binding site" evidence="1">
    <location>
        <position position="258"/>
    </location>
    <ligand>
        <name>Mn(2+)</name>
        <dbReference type="ChEBI" id="CHEBI:29035"/>
    </ligand>
</feature>
<feature type="sequence conflict" description="In Ref. 4; BAE99313." evidence="3" ref="4">
    <original>P</original>
    <variation>Q</variation>
    <location>
        <position position="87"/>
    </location>
</feature>
<organism>
    <name type="scientific">Arabidopsis thaliana</name>
    <name type="common">Mouse-ear cress</name>
    <dbReference type="NCBI Taxonomy" id="3702"/>
    <lineage>
        <taxon>Eukaryota</taxon>
        <taxon>Viridiplantae</taxon>
        <taxon>Streptophyta</taxon>
        <taxon>Embryophyta</taxon>
        <taxon>Tracheophyta</taxon>
        <taxon>Spermatophyta</taxon>
        <taxon>Magnoliopsida</taxon>
        <taxon>eudicotyledons</taxon>
        <taxon>Gunneridae</taxon>
        <taxon>Pentapetalae</taxon>
        <taxon>rosids</taxon>
        <taxon>malvids</taxon>
        <taxon>Brassicales</taxon>
        <taxon>Brassicaceae</taxon>
        <taxon>Camelineae</taxon>
        <taxon>Arabidopsis</taxon>
    </lineage>
</organism>